<protein>
    <recommendedName>
        <fullName evidence="1">Imidazole glycerol phosphate synthase subunit HisF</fullName>
        <ecNumber evidence="1">4.3.2.10</ecNumber>
    </recommendedName>
    <alternativeName>
        <fullName evidence="1">IGP synthase cyclase subunit</fullName>
    </alternativeName>
    <alternativeName>
        <fullName evidence="1">IGP synthase subunit HisF</fullName>
    </alternativeName>
    <alternativeName>
        <fullName evidence="1">ImGP synthase subunit HisF</fullName>
        <shortName evidence="1">IGPS subunit HisF</shortName>
    </alternativeName>
</protein>
<accession>Q13TR0</accession>
<sequence>MALAKRIIPCLDVTAGRVVKGVNFVELRDAGDPVEIARRYDDQGADELTFLDITATSDQRDLILPIIEAVASQVFIPLTVGGGVRAVEDVRRLLNAGADKISMNSSAVANPQLVKDATDKYGSQCIVVAIDAKRVSAEGEVPRWEVFTHGGRKATGLDAVEWARKMAELGAGEILLTSMDRDGTKSGFDLALTRAVSDAVPIPVIASGGVGNLQHLADGIKEGHADAVLAASIFHYGEHTVGEAKRFMADQGISVRL</sequence>
<gene>
    <name evidence="1" type="primary">hisF</name>
    <name type="ordered locus">Bxeno_A3991</name>
    <name type="ORF">Bxe_A0404</name>
</gene>
<reference key="1">
    <citation type="journal article" date="2006" name="Proc. Natl. Acad. Sci. U.S.A.">
        <title>Burkholderia xenovorans LB400 harbors a multi-replicon, 9.73-Mbp genome shaped for versatility.</title>
        <authorList>
            <person name="Chain P.S.G."/>
            <person name="Denef V.J."/>
            <person name="Konstantinidis K.T."/>
            <person name="Vergez L.M."/>
            <person name="Agullo L."/>
            <person name="Reyes V.L."/>
            <person name="Hauser L."/>
            <person name="Cordova M."/>
            <person name="Gomez L."/>
            <person name="Gonzalez M."/>
            <person name="Land M."/>
            <person name="Lao V."/>
            <person name="Larimer F."/>
            <person name="LiPuma J.J."/>
            <person name="Mahenthiralingam E."/>
            <person name="Malfatti S.A."/>
            <person name="Marx C.J."/>
            <person name="Parnell J.J."/>
            <person name="Ramette A."/>
            <person name="Richardson P."/>
            <person name="Seeger M."/>
            <person name="Smith D."/>
            <person name="Spilker T."/>
            <person name="Sul W.J."/>
            <person name="Tsoi T.V."/>
            <person name="Ulrich L.E."/>
            <person name="Zhulin I.B."/>
            <person name="Tiedje J.M."/>
        </authorList>
    </citation>
    <scope>NUCLEOTIDE SEQUENCE [LARGE SCALE GENOMIC DNA]</scope>
    <source>
        <strain>LB400</strain>
    </source>
</reference>
<dbReference type="EC" id="4.3.2.10" evidence="1"/>
<dbReference type="EMBL" id="CP000270">
    <property type="protein sequence ID" value="ABE32529.1"/>
    <property type="molecule type" value="Genomic_DNA"/>
</dbReference>
<dbReference type="RefSeq" id="WP_011489990.1">
    <property type="nucleotide sequence ID" value="NC_007951.1"/>
</dbReference>
<dbReference type="SMR" id="Q13TR0"/>
<dbReference type="STRING" id="266265.Bxe_A0404"/>
<dbReference type="KEGG" id="bxb:DR64_2574"/>
<dbReference type="KEGG" id="bxe:Bxe_A0404"/>
<dbReference type="PATRIC" id="fig|266265.5.peg.4216"/>
<dbReference type="eggNOG" id="COG0107">
    <property type="taxonomic scope" value="Bacteria"/>
</dbReference>
<dbReference type="OrthoDB" id="9781903at2"/>
<dbReference type="UniPathway" id="UPA00031">
    <property type="reaction ID" value="UER00010"/>
</dbReference>
<dbReference type="Proteomes" id="UP000001817">
    <property type="component" value="Chromosome 1"/>
</dbReference>
<dbReference type="GO" id="GO:0005737">
    <property type="term" value="C:cytoplasm"/>
    <property type="evidence" value="ECO:0007669"/>
    <property type="project" value="UniProtKB-SubCell"/>
</dbReference>
<dbReference type="GO" id="GO:0000107">
    <property type="term" value="F:imidazoleglycerol-phosphate synthase activity"/>
    <property type="evidence" value="ECO:0007669"/>
    <property type="project" value="UniProtKB-UniRule"/>
</dbReference>
<dbReference type="GO" id="GO:0016829">
    <property type="term" value="F:lyase activity"/>
    <property type="evidence" value="ECO:0007669"/>
    <property type="project" value="UniProtKB-KW"/>
</dbReference>
<dbReference type="GO" id="GO:0000105">
    <property type="term" value="P:L-histidine biosynthetic process"/>
    <property type="evidence" value="ECO:0007669"/>
    <property type="project" value="UniProtKB-UniRule"/>
</dbReference>
<dbReference type="CDD" id="cd04731">
    <property type="entry name" value="HisF"/>
    <property type="match status" value="1"/>
</dbReference>
<dbReference type="FunFam" id="3.20.20.70:FF:000006">
    <property type="entry name" value="Imidazole glycerol phosphate synthase subunit HisF"/>
    <property type="match status" value="1"/>
</dbReference>
<dbReference type="Gene3D" id="3.20.20.70">
    <property type="entry name" value="Aldolase class I"/>
    <property type="match status" value="1"/>
</dbReference>
<dbReference type="HAMAP" id="MF_01013">
    <property type="entry name" value="HisF"/>
    <property type="match status" value="1"/>
</dbReference>
<dbReference type="InterPro" id="IPR013785">
    <property type="entry name" value="Aldolase_TIM"/>
</dbReference>
<dbReference type="InterPro" id="IPR006062">
    <property type="entry name" value="His_biosynth"/>
</dbReference>
<dbReference type="InterPro" id="IPR004651">
    <property type="entry name" value="HisF"/>
</dbReference>
<dbReference type="InterPro" id="IPR050064">
    <property type="entry name" value="IGPS_HisA/HisF"/>
</dbReference>
<dbReference type="InterPro" id="IPR011060">
    <property type="entry name" value="RibuloseP-bd_barrel"/>
</dbReference>
<dbReference type="NCBIfam" id="TIGR00735">
    <property type="entry name" value="hisF"/>
    <property type="match status" value="1"/>
</dbReference>
<dbReference type="PANTHER" id="PTHR21235:SF2">
    <property type="entry name" value="IMIDAZOLE GLYCEROL PHOSPHATE SYNTHASE HISHF"/>
    <property type="match status" value="1"/>
</dbReference>
<dbReference type="PANTHER" id="PTHR21235">
    <property type="entry name" value="IMIDAZOLE GLYCEROL PHOSPHATE SYNTHASE SUBUNIT HISF/H IGP SYNTHASE SUBUNIT HISF/H"/>
    <property type="match status" value="1"/>
</dbReference>
<dbReference type="Pfam" id="PF00977">
    <property type="entry name" value="His_biosynth"/>
    <property type="match status" value="1"/>
</dbReference>
<dbReference type="SUPFAM" id="SSF51366">
    <property type="entry name" value="Ribulose-phoshate binding barrel"/>
    <property type="match status" value="1"/>
</dbReference>
<name>HIS6_PARXL</name>
<comment type="function">
    <text evidence="1">IGPS catalyzes the conversion of PRFAR and glutamine to IGP, AICAR and glutamate. The HisF subunit catalyzes the cyclization activity that produces IGP and AICAR from PRFAR using the ammonia provided by the HisH subunit.</text>
</comment>
<comment type="catalytic activity">
    <reaction evidence="1">
        <text>5-[(5-phospho-1-deoxy-D-ribulos-1-ylimino)methylamino]-1-(5-phospho-beta-D-ribosyl)imidazole-4-carboxamide + L-glutamine = D-erythro-1-(imidazol-4-yl)glycerol 3-phosphate + 5-amino-1-(5-phospho-beta-D-ribosyl)imidazole-4-carboxamide + L-glutamate + H(+)</text>
        <dbReference type="Rhea" id="RHEA:24793"/>
        <dbReference type="ChEBI" id="CHEBI:15378"/>
        <dbReference type="ChEBI" id="CHEBI:29985"/>
        <dbReference type="ChEBI" id="CHEBI:58278"/>
        <dbReference type="ChEBI" id="CHEBI:58359"/>
        <dbReference type="ChEBI" id="CHEBI:58475"/>
        <dbReference type="ChEBI" id="CHEBI:58525"/>
        <dbReference type="EC" id="4.3.2.10"/>
    </reaction>
</comment>
<comment type="pathway">
    <text evidence="1">Amino-acid biosynthesis; L-histidine biosynthesis; L-histidine from 5-phospho-alpha-D-ribose 1-diphosphate: step 5/9.</text>
</comment>
<comment type="subunit">
    <text evidence="1">Heterodimer of HisH and HisF.</text>
</comment>
<comment type="subcellular location">
    <subcellularLocation>
        <location evidence="1">Cytoplasm</location>
    </subcellularLocation>
</comment>
<comment type="similarity">
    <text evidence="1">Belongs to the HisA/HisF family.</text>
</comment>
<evidence type="ECO:0000255" key="1">
    <source>
        <dbReference type="HAMAP-Rule" id="MF_01013"/>
    </source>
</evidence>
<keyword id="KW-0028">Amino-acid biosynthesis</keyword>
<keyword id="KW-0963">Cytoplasm</keyword>
<keyword id="KW-0368">Histidine biosynthesis</keyword>
<keyword id="KW-0456">Lyase</keyword>
<keyword id="KW-1185">Reference proteome</keyword>
<organism>
    <name type="scientific">Paraburkholderia xenovorans (strain LB400)</name>
    <dbReference type="NCBI Taxonomy" id="266265"/>
    <lineage>
        <taxon>Bacteria</taxon>
        <taxon>Pseudomonadati</taxon>
        <taxon>Pseudomonadota</taxon>
        <taxon>Betaproteobacteria</taxon>
        <taxon>Burkholderiales</taxon>
        <taxon>Burkholderiaceae</taxon>
        <taxon>Paraburkholderia</taxon>
    </lineage>
</organism>
<feature type="chain" id="PRO_1000063038" description="Imidazole glycerol phosphate synthase subunit HisF">
    <location>
        <begin position="1"/>
        <end position="257"/>
    </location>
</feature>
<feature type="active site" evidence="1">
    <location>
        <position position="12"/>
    </location>
</feature>
<feature type="active site" evidence="1">
    <location>
        <position position="131"/>
    </location>
</feature>
<proteinExistence type="inferred from homology"/>